<accession>P0DSR5</accession>
<accession>P33824</accession>
<keyword id="KW-0040">ANK repeat</keyword>
<keyword id="KW-1185">Reference proteome</keyword>
<keyword id="KW-0677">Repeat</keyword>
<proteinExistence type="predicted"/>
<reference key="1">
    <citation type="journal article" date="1991" name="Dokl. Akad. Nauk SSSR">
        <title>Creation of a clone library of fragments from the natural variola virus and study of the structural and functional organization of viral genes from a circle of hosts.</title>
        <authorList>
            <person name="Shchelkunov S.N."/>
            <person name="Marennikova S.S."/>
            <person name="Totmenin A.V."/>
            <person name="Blinov V.M."/>
            <person name="Chizhikov V.E."/>
            <person name="Gutorov V.V."/>
            <person name="Safronov P.F."/>
            <person name="Pozdnyakov S.G."/>
            <person name="Shelukhina E.M."/>
            <person name="Gashnikov P.V."/>
            <person name="Anjaparidze O.G."/>
            <person name="Sandakhchiev L.S."/>
        </authorList>
    </citation>
    <scope>NUCLEOTIDE SEQUENCE [GENOMIC DNA]</scope>
</reference>
<reference key="2">
    <citation type="journal article" date="1993" name="FEBS Lett.">
        <title>Genes of variola and vaccinia viruses necessary to overcome the host protective mechanisms.</title>
        <authorList>
            <person name="Shchelkunov S.N."/>
            <person name="Blinov V.M."/>
            <person name="Sandakhchiev L.S."/>
        </authorList>
    </citation>
    <scope>NUCLEOTIDE SEQUENCE [LARGE SCALE GENOMIC DNA]</scope>
</reference>
<sequence>MSRRLIYVLNINRKSTHKIQENEIYTYFSYCNIDHTSTELDFVVKNYDLNRRQPVTGYTALHCYLYNNYFTNDVLKVLLNHGVDVTIKPSSGHMPIYILLTRCCNISHNVVIDMINKDKTHLSHKDYSNLLLEYIKSRYMLLKEEDIDENIVSTLLDKGIDPNFKQDGYTALHYYYLCLAHVYKPGECRKPITIKKAKRIISLFIQHGANLNALDNCGNTPFHLYLSIEMCNNIHMTKMLLTFNPNFEICNNHGLTPILCYITSDYIQHDILVMLIHHYETNVGEMPIDERRMIVFEFIKTYSTRPLDSITYLMNRFKNIDIHTRYEGKTLLHIACEYNNTHVIDYLIRINGDINALTDNNKHAIQLIIDNKENSQYTIDCLLYILRYIVDKNVIRSLVDQLPYLPIFDIKSFEKFISYCILLDDTFYDRHVQNRDSKTYRYTFSKYISFDKYDSIITKCYEETILLKLSTVLDTTLYSVLRCHNSRKLKRYLSVLKKYNNDKSFKIYSNIMNERYLNVYYKDMYVSKVYDKLFPVFTDKKCLLTLLPSEIIYEILYMLTIYDLYNISYPPTKV</sequence>
<evidence type="ECO:0000255" key="1">
    <source>
        <dbReference type="PROSITE-ProRule" id="PRU00080"/>
    </source>
</evidence>
<organism>
    <name type="scientific">Variola virus (isolate Human/India/Ind3/1967)</name>
    <name type="common">VARV</name>
    <name type="synonym">Smallpox virus</name>
    <dbReference type="NCBI Taxonomy" id="587200"/>
    <lineage>
        <taxon>Viruses</taxon>
        <taxon>Varidnaviria</taxon>
        <taxon>Bamfordvirae</taxon>
        <taxon>Nucleocytoviricota</taxon>
        <taxon>Pokkesviricetes</taxon>
        <taxon>Chitovirales</taxon>
        <taxon>Poxviridae</taxon>
        <taxon>Chordopoxvirinae</taxon>
        <taxon>Orthopoxvirus</taxon>
        <taxon>Variola virus</taxon>
    </lineage>
</organism>
<organismHost>
    <name type="scientific">Homo sapiens</name>
    <name type="common">Human</name>
    <dbReference type="NCBI Taxonomy" id="9606"/>
</organismHost>
<feature type="chain" id="PRO_0000067091" description="Ankyrin repeat protein B18">
    <location>
        <begin position="1"/>
        <end position="574"/>
    </location>
</feature>
<feature type="repeat" description="ANK 1">
    <location>
        <begin position="56"/>
        <end position="87"/>
    </location>
</feature>
<feature type="repeat" description="ANK 2">
    <location>
        <begin position="135"/>
        <end position="164"/>
    </location>
</feature>
<feature type="repeat" description="ANK 3">
    <location>
        <begin position="167"/>
        <end position="213"/>
    </location>
</feature>
<feature type="repeat" description="ANK 4">
    <location>
        <begin position="217"/>
        <end position="249"/>
    </location>
</feature>
<feature type="repeat" description="ANK 5">
    <location>
        <begin position="253"/>
        <end position="285"/>
    </location>
</feature>
<feature type="repeat" description="ANK 6">
    <location>
        <begin position="327"/>
        <end position="356"/>
    </location>
</feature>
<feature type="domain" description="F-box" evidence="1">
    <location>
        <begin position="541"/>
        <end position="574"/>
    </location>
</feature>
<name>VB18_VAR67</name>
<gene>
    <name type="ORF">B16R</name>
    <name type="ORF">B18R</name>
    <name type="ORF">B19R</name>
</gene>
<dbReference type="EMBL" id="X69198">
    <property type="protein sequence ID" value="CAA49128.1"/>
    <property type="molecule type" value="Genomic_DNA"/>
</dbReference>
<dbReference type="EMBL" id="X67117">
    <property type="protein sequence ID" value="CAA47528.1"/>
    <property type="molecule type" value="Genomic_DNA"/>
</dbReference>
<dbReference type="PIR" id="A36857">
    <property type="entry name" value="A36857"/>
</dbReference>
<dbReference type="RefSeq" id="NP_042231.1">
    <property type="nucleotide sequence ID" value="NC_001611.1"/>
</dbReference>
<dbReference type="SMR" id="P0DSR5"/>
<dbReference type="GeneID" id="1486549"/>
<dbReference type="KEGG" id="vg:1486549"/>
<dbReference type="Proteomes" id="UP000002060">
    <property type="component" value="Segment"/>
</dbReference>
<dbReference type="Gene3D" id="1.25.40.20">
    <property type="entry name" value="Ankyrin repeat-containing domain"/>
    <property type="match status" value="3"/>
</dbReference>
<dbReference type="InterPro" id="IPR051637">
    <property type="entry name" value="Ank_repeat_dom-contain_49"/>
</dbReference>
<dbReference type="InterPro" id="IPR002110">
    <property type="entry name" value="Ankyrin_rpt"/>
</dbReference>
<dbReference type="InterPro" id="IPR036770">
    <property type="entry name" value="Ankyrin_rpt-contain_sf"/>
</dbReference>
<dbReference type="InterPro" id="IPR001810">
    <property type="entry name" value="F-box_dom"/>
</dbReference>
<dbReference type="InterPro" id="IPR018272">
    <property type="entry name" value="PRANC_domain"/>
</dbReference>
<dbReference type="PANTHER" id="PTHR24180">
    <property type="entry name" value="CYCLIN-DEPENDENT KINASE INHIBITOR 2C-RELATED"/>
    <property type="match status" value="1"/>
</dbReference>
<dbReference type="PANTHER" id="PTHR24180:SF45">
    <property type="entry name" value="POLY [ADP-RIBOSE] POLYMERASE TANKYRASE"/>
    <property type="match status" value="1"/>
</dbReference>
<dbReference type="Pfam" id="PF00023">
    <property type="entry name" value="Ank"/>
    <property type="match status" value="1"/>
</dbReference>
<dbReference type="Pfam" id="PF13606">
    <property type="entry name" value="Ank_3"/>
    <property type="match status" value="1"/>
</dbReference>
<dbReference type="Pfam" id="PF09372">
    <property type="entry name" value="PRANC"/>
    <property type="match status" value="1"/>
</dbReference>
<dbReference type="SMART" id="SM00248">
    <property type="entry name" value="ANK"/>
    <property type="match status" value="7"/>
</dbReference>
<dbReference type="SUPFAM" id="SSF48403">
    <property type="entry name" value="Ankyrin repeat"/>
    <property type="match status" value="1"/>
</dbReference>
<dbReference type="PROSITE" id="PS50297">
    <property type="entry name" value="ANK_REP_REGION"/>
    <property type="match status" value="1"/>
</dbReference>
<dbReference type="PROSITE" id="PS50088">
    <property type="entry name" value="ANK_REPEAT"/>
    <property type="match status" value="2"/>
</dbReference>
<dbReference type="PROSITE" id="PS50181">
    <property type="entry name" value="FBOX"/>
    <property type="match status" value="1"/>
</dbReference>
<protein>
    <recommendedName>
        <fullName>Ankyrin repeat protein B18</fullName>
    </recommendedName>
</protein>